<protein>
    <recommendedName>
        <fullName>Uncharacterized glycosyltransferase MT1564</fullName>
        <ecNumber>2.4.-.-</ecNumber>
    </recommendedName>
</protein>
<evidence type="ECO:0000305" key="1"/>
<name>Y1514_MYCTO</name>
<reference key="1">
    <citation type="journal article" date="2002" name="J. Bacteriol.">
        <title>Whole-genome comparison of Mycobacterium tuberculosis clinical and laboratory strains.</title>
        <authorList>
            <person name="Fleischmann R.D."/>
            <person name="Alland D."/>
            <person name="Eisen J.A."/>
            <person name="Carpenter L."/>
            <person name="White O."/>
            <person name="Peterson J.D."/>
            <person name="DeBoy R.T."/>
            <person name="Dodson R.J."/>
            <person name="Gwinn M.L."/>
            <person name="Haft D.H."/>
            <person name="Hickey E.K."/>
            <person name="Kolonay J.F."/>
            <person name="Nelson W.C."/>
            <person name="Umayam L.A."/>
            <person name="Ermolaeva M.D."/>
            <person name="Salzberg S.L."/>
            <person name="Delcher A."/>
            <person name="Utterback T.R."/>
            <person name="Weidman J.F."/>
            <person name="Khouri H.M."/>
            <person name="Gill J."/>
            <person name="Mikula A."/>
            <person name="Bishai W."/>
            <person name="Jacobs W.R. Jr."/>
            <person name="Venter J.C."/>
            <person name="Fraser C.M."/>
        </authorList>
    </citation>
    <scope>NUCLEOTIDE SEQUENCE [LARGE SCALE GENOMIC DNA]</scope>
    <source>
        <strain>CDC 1551 / Oshkosh</strain>
    </source>
</reference>
<comment type="similarity">
    <text evidence="1">Belongs to the glycosyltransferase 2 family.</text>
</comment>
<organism>
    <name type="scientific">Mycobacterium tuberculosis (strain CDC 1551 / Oshkosh)</name>
    <dbReference type="NCBI Taxonomy" id="83331"/>
    <lineage>
        <taxon>Bacteria</taxon>
        <taxon>Bacillati</taxon>
        <taxon>Actinomycetota</taxon>
        <taxon>Actinomycetes</taxon>
        <taxon>Mycobacteriales</taxon>
        <taxon>Mycobacteriaceae</taxon>
        <taxon>Mycobacterium</taxon>
        <taxon>Mycobacterium tuberculosis complex</taxon>
    </lineage>
</organism>
<feature type="chain" id="PRO_0000427224" description="Uncharacterized glycosyltransferase MT1564">
    <location>
        <begin position="1"/>
        <end position="262"/>
    </location>
</feature>
<dbReference type="EC" id="2.4.-.-"/>
<dbReference type="EMBL" id="AE000516">
    <property type="protein sequence ID" value="AAK45831.1"/>
    <property type="molecule type" value="Genomic_DNA"/>
</dbReference>
<dbReference type="PIR" id="E70714">
    <property type="entry name" value="E70714"/>
</dbReference>
<dbReference type="RefSeq" id="WP_003407650.1">
    <property type="nucleotide sequence ID" value="NZ_KK341227.1"/>
</dbReference>
<dbReference type="SMR" id="P9WMX8"/>
<dbReference type="CAZy" id="GT2">
    <property type="family name" value="Glycosyltransferase Family 2"/>
</dbReference>
<dbReference type="KEGG" id="mtc:MT1564"/>
<dbReference type="PATRIC" id="fig|83331.31.peg.1683"/>
<dbReference type="HOGENOM" id="CLU_025996_21_2_11"/>
<dbReference type="Proteomes" id="UP000001020">
    <property type="component" value="Chromosome"/>
</dbReference>
<dbReference type="GO" id="GO:0016757">
    <property type="term" value="F:glycosyltransferase activity"/>
    <property type="evidence" value="ECO:0007669"/>
    <property type="project" value="UniProtKB-KW"/>
</dbReference>
<dbReference type="CDD" id="cd06433">
    <property type="entry name" value="GT_2_WfgS_like"/>
    <property type="match status" value="1"/>
</dbReference>
<dbReference type="Gene3D" id="3.90.550.10">
    <property type="entry name" value="Spore Coat Polysaccharide Biosynthesis Protein SpsA, Chain A"/>
    <property type="match status" value="1"/>
</dbReference>
<dbReference type="InterPro" id="IPR001173">
    <property type="entry name" value="Glyco_trans_2-like"/>
</dbReference>
<dbReference type="InterPro" id="IPR029044">
    <property type="entry name" value="Nucleotide-diphossugar_trans"/>
</dbReference>
<dbReference type="PANTHER" id="PTHR22916:SF67">
    <property type="entry name" value="COLANIC ACID BIOSYNTHESIS GLYCOSYL TRANSFERASE WCAE-RELATED"/>
    <property type="match status" value="1"/>
</dbReference>
<dbReference type="PANTHER" id="PTHR22916">
    <property type="entry name" value="GLYCOSYLTRANSFERASE"/>
    <property type="match status" value="1"/>
</dbReference>
<dbReference type="Pfam" id="PF00535">
    <property type="entry name" value="Glycos_transf_2"/>
    <property type="match status" value="1"/>
</dbReference>
<dbReference type="SUPFAM" id="SSF53448">
    <property type="entry name" value="Nucleotide-diphospho-sugar transferases"/>
    <property type="match status" value="1"/>
</dbReference>
<keyword id="KW-0328">Glycosyltransferase</keyword>
<keyword id="KW-1185">Reference proteome</keyword>
<keyword id="KW-0808">Transferase</keyword>
<sequence>MTSAPTVSVITISFNDLDGLQRTVKSVRAQRYRGRIEHIVIDGGSGDDVVAYLSGCEPGFAYWQSEPDGGRYDAMNQGIAHASGDLLWFLHSADRFSGPDVVAQAVEALSGKGPVSELWGFGMDRLVGLDRVRGPIPFSLRKFLAGKQVVPHQASFFGSSLVAKIGGYDLDFGIAADQEFILRAALVCEPVTIRCVLCEFDTTGVGSHREPSAVFGDLRRMGDLHRRYPFGGRRISHAYLRGREFYAYNSRFWENVFTRMSK</sequence>
<gene>
    <name type="ordered locus">MT1564</name>
</gene>
<accession>P9WMX8</accession>
<accession>L0T9V1</accession>
<accession>P71793</accession>
<proteinExistence type="inferred from homology"/>